<proteinExistence type="inferred from homology"/>
<sequence>MEIIRTVAEMRAWRKQAGKLAFVPTMGNLHEGHLKLVAAARERAEKVVVSIFVNRLQFGQGEDFDAYPRTFDADCAKLAAAGVDALFFPSERELYPRVRQDFNVEPPHIQNELCGAFRPGHFRGVATVVTKLFNIVQPDLACFGKKDYQQLHVIQAMIADLNSPIEIVPVDTGRAGDGLALSSRNGYLSAEERAEAPRLYRNLSMIRDGLMAGSQDYAALEQAARDDLAAAGWTVDYVEVRQADTLEIAHAGEKRLVVLAAARLGKTRLIDNIEVFR</sequence>
<feature type="chain" id="PRO_0000128220" description="Pantothenate synthetase">
    <location>
        <begin position="1"/>
        <end position="277"/>
    </location>
</feature>
<feature type="active site" description="Proton donor" evidence="1">
    <location>
        <position position="33"/>
    </location>
</feature>
<feature type="binding site" evidence="1">
    <location>
        <begin position="26"/>
        <end position="33"/>
    </location>
    <ligand>
        <name>ATP</name>
        <dbReference type="ChEBI" id="CHEBI:30616"/>
    </ligand>
</feature>
<feature type="binding site" evidence="1">
    <location>
        <position position="57"/>
    </location>
    <ligand>
        <name>(R)-pantoate</name>
        <dbReference type="ChEBI" id="CHEBI:15980"/>
    </ligand>
</feature>
<feature type="binding site" evidence="1">
    <location>
        <position position="57"/>
    </location>
    <ligand>
        <name>beta-alanine</name>
        <dbReference type="ChEBI" id="CHEBI:57966"/>
    </ligand>
</feature>
<feature type="binding site" evidence="1">
    <location>
        <begin position="144"/>
        <end position="147"/>
    </location>
    <ligand>
        <name>ATP</name>
        <dbReference type="ChEBI" id="CHEBI:30616"/>
    </ligand>
</feature>
<feature type="binding site" evidence="1">
    <location>
        <position position="150"/>
    </location>
    <ligand>
        <name>(R)-pantoate</name>
        <dbReference type="ChEBI" id="CHEBI:15980"/>
    </ligand>
</feature>
<feature type="binding site" evidence="1">
    <location>
        <position position="173"/>
    </location>
    <ligand>
        <name>ATP</name>
        <dbReference type="ChEBI" id="CHEBI:30616"/>
    </ligand>
</feature>
<feature type="binding site" evidence="1">
    <location>
        <begin position="181"/>
        <end position="184"/>
    </location>
    <ligand>
        <name>ATP</name>
        <dbReference type="ChEBI" id="CHEBI:30616"/>
    </ligand>
</feature>
<name>PANC_CHRVO</name>
<accession>Q7NXJ0</accession>
<gene>
    <name evidence="1" type="primary">panC</name>
    <name type="ordered locus">CV_1636</name>
</gene>
<keyword id="KW-0067">ATP-binding</keyword>
<keyword id="KW-0963">Cytoplasm</keyword>
<keyword id="KW-0436">Ligase</keyword>
<keyword id="KW-0547">Nucleotide-binding</keyword>
<keyword id="KW-0566">Pantothenate biosynthesis</keyword>
<keyword id="KW-1185">Reference proteome</keyword>
<protein>
    <recommendedName>
        <fullName evidence="1">Pantothenate synthetase</fullName>
        <shortName evidence="1">PS</shortName>
        <ecNumber evidence="1">6.3.2.1</ecNumber>
    </recommendedName>
    <alternativeName>
        <fullName evidence="1">Pantoate--beta-alanine ligase</fullName>
    </alternativeName>
    <alternativeName>
        <fullName evidence="1">Pantoate-activating enzyme</fullName>
    </alternativeName>
</protein>
<dbReference type="EC" id="6.3.2.1" evidence="1"/>
<dbReference type="EMBL" id="AE016825">
    <property type="protein sequence ID" value="AAQ59312.1"/>
    <property type="molecule type" value="Genomic_DNA"/>
</dbReference>
<dbReference type="RefSeq" id="WP_011135188.1">
    <property type="nucleotide sequence ID" value="NC_005085.1"/>
</dbReference>
<dbReference type="SMR" id="Q7NXJ0"/>
<dbReference type="STRING" id="243365.CV_1636"/>
<dbReference type="KEGG" id="cvi:CV_1636"/>
<dbReference type="eggNOG" id="COG0414">
    <property type="taxonomic scope" value="Bacteria"/>
</dbReference>
<dbReference type="HOGENOM" id="CLU_047148_0_0_4"/>
<dbReference type="OrthoDB" id="9773087at2"/>
<dbReference type="UniPathway" id="UPA00028">
    <property type="reaction ID" value="UER00005"/>
</dbReference>
<dbReference type="Proteomes" id="UP000001424">
    <property type="component" value="Chromosome"/>
</dbReference>
<dbReference type="GO" id="GO:0005829">
    <property type="term" value="C:cytosol"/>
    <property type="evidence" value="ECO:0007669"/>
    <property type="project" value="TreeGrafter"/>
</dbReference>
<dbReference type="GO" id="GO:0005524">
    <property type="term" value="F:ATP binding"/>
    <property type="evidence" value="ECO:0007669"/>
    <property type="project" value="UniProtKB-KW"/>
</dbReference>
<dbReference type="GO" id="GO:0004592">
    <property type="term" value="F:pantoate-beta-alanine ligase activity"/>
    <property type="evidence" value="ECO:0007669"/>
    <property type="project" value="UniProtKB-UniRule"/>
</dbReference>
<dbReference type="GO" id="GO:0015940">
    <property type="term" value="P:pantothenate biosynthetic process"/>
    <property type="evidence" value="ECO:0007669"/>
    <property type="project" value="UniProtKB-UniRule"/>
</dbReference>
<dbReference type="CDD" id="cd00560">
    <property type="entry name" value="PanC"/>
    <property type="match status" value="1"/>
</dbReference>
<dbReference type="FunFam" id="3.30.1300.10:FF:000001">
    <property type="entry name" value="Pantothenate synthetase"/>
    <property type="match status" value="1"/>
</dbReference>
<dbReference type="FunFam" id="3.40.50.620:FF:000013">
    <property type="entry name" value="Pantothenate synthetase"/>
    <property type="match status" value="1"/>
</dbReference>
<dbReference type="Gene3D" id="3.40.50.620">
    <property type="entry name" value="HUPs"/>
    <property type="match status" value="1"/>
</dbReference>
<dbReference type="Gene3D" id="3.30.1300.10">
    <property type="entry name" value="Pantoate-beta-alanine ligase, C-terminal domain"/>
    <property type="match status" value="1"/>
</dbReference>
<dbReference type="HAMAP" id="MF_00158">
    <property type="entry name" value="PanC"/>
    <property type="match status" value="1"/>
</dbReference>
<dbReference type="InterPro" id="IPR004821">
    <property type="entry name" value="Cyt_trans-like"/>
</dbReference>
<dbReference type="InterPro" id="IPR003721">
    <property type="entry name" value="Pantoate_ligase"/>
</dbReference>
<dbReference type="InterPro" id="IPR042176">
    <property type="entry name" value="Pantoate_ligase_C"/>
</dbReference>
<dbReference type="InterPro" id="IPR014729">
    <property type="entry name" value="Rossmann-like_a/b/a_fold"/>
</dbReference>
<dbReference type="NCBIfam" id="TIGR00125">
    <property type="entry name" value="cyt_tran_rel"/>
    <property type="match status" value="1"/>
</dbReference>
<dbReference type="NCBIfam" id="TIGR00018">
    <property type="entry name" value="panC"/>
    <property type="match status" value="1"/>
</dbReference>
<dbReference type="PANTHER" id="PTHR21299">
    <property type="entry name" value="CYTIDYLATE KINASE/PANTOATE-BETA-ALANINE LIGASE"/>
    <property type="match status" value="1"/>
</dbReference>
<dbReference type="PANTHER" id="PTHR21299:SF1">
    <property type="entry name" value="PANTOATE--BETA-ALANINE LIGASE"/>
    <property type="match status" value="1"/>
</dbReference>
<dbReference type="Pfam" id="PF02569">
    <property type="entry name" value="Pantoate_ligase"/>
    <property type="match status" value="1"/>
</dbReference>
<dbReference type="SUPFAM" id="SSF52374">
    <property type="entry name" value="Nucleotidylyl transferase"/>
    <property type="match status" value="1"/>
</dbReference>
<evidence type="ECO:0000255" key="1">
    <source>
        <dbReference type="HAMAP-Rule" id="MF_00158"/>
    </source>
</evidence>
<comment type="function">
    <text evidence="1">Catalyzes the condensation of pantoate with beta-alanine in an ATP-dependent reaction via a pantoyl-adenylate intermediate.</text>
</comment>
<comment type="catalytic activity">
    <reaction evidence="1">
        <text>(R)-pantoate + beta-alanine + ATP = (R)-pantothenate + AMP + diphosphate + H(+)</text>
        <dbReference type="Rhea" id="RHEA:10912"/>
        <dbReference type="ChEBI" id="CHEBI:15378"/>
        <dbReference type="ChEBI" id="CHEBI:15980"/>
        <dbReference type="ChEBI" id="CHEBI:29032"/>
        <dbReference type="ChEBI" id="CHEBI:30616"/>
        <dbReference type="ChEBI" id="CHEBI:33019"/>
        <dbReference type="ChEBI" id="CHEBI:57966"/>
        <dbReference type="ChEBI" id="CHEBI:456215"/>
        <dbReference type="EC" id="6.3.2.1"/>
    </reaction>
</comment>
<comment type="pathway">
    <text evidence="1">Cofactor biosynthesis; (R)-pantothenate biosynthesis; (R)-pantothenate from (R)-pantoate and beta-alanine: step 1/1.</text>
</comment>
<comment type="subunit">
    <text evidence="1">Homodimer.</text>
</comment>
<comment type="subcellular location">
    <subcellularLocation>
        <location evidence="1">Cytoplasm</location>
    </subcellularLocation>
</comment>
<comment type="miscellaneous">
    <text evidence="1">The reaction proceeds by a bi uni uni bi ping pong mechanism.</text>
</comment>
<comment type="similarity">
    <text evidence="1">Belongs to the pantothenate synthetase family.</text>
</comment>
<reference key="1">
    <citation type="journal article" date="2003" name="Proc. Natl. Acad. Sci. U.S.A.">
        <title>The complete genome sequence of Chromobacterium violaceum reveals remarkable and exploitable bacterial adaptability.</title>
        <authorList>
            <person name="Vasconcelos A.T.R."/>
            <person name="de Almeida D.F."/>
            <person name="Hungria M."/>
            <person name="Guimaraes C.T."/>
            <person name="Antonio R.V."/>
            <person name="Almeida F.C."/>
            <person name="de Almeida L.G.P."/>
            <person name="de Almeida R."/>
            <person name="Alves-Gomes J.A."/>
            <person name="Andrade E.M."/>
            <person name="Araripe J."/>
            <person name="de Araujo M.F.F."/>
            <person name="Astolfi-Filho S."/>
            <person name="Azevedo V."/>
            <person name="Baptista A.J."/>
            <person name="Bataus L.A.M."/>
            <person name="Batista J.S."/>
            <person name="Belo A."/>
            <person name="van den Berg C."/>
            <person name="Bogo M."/>
            <person name="Bonatto S."/>
            <person name="Bordignon J."/>
            <person name="Brigido M.M."/>
            <person name="Brito C.A."/>
            <person name="Brocchi M."/>
            <person name="Burity H.A."/>
            <person name="Camargo A.A."/>
            <person name="Cardoso D.D.P."/>
            <person name="Carneiro N.P."/>
            <person name="Carraro D.M."/>
            <person name="Carvalho C.M.B."/>
            <person name="Cascardo J.C.M."/>
            <person name="Cavada B.S."/>
            <person name="Chueire L.M.O."/>
            <person name="Creczynski-Pasa T.B."/>
            <person name="Cunha-Junior N.C."/>
            <person name="Fagundes N."/>
            <person name="Falcao C.L."/>
            <person name="Fantinatti F."/>
            <person name="Farias I.P."/>
            <person name="Felipe M.S.S."/>
            <person name="Ferrari L.P."/>
            <person name="Ferro J.A."/>
            <person name="Ferro M.I.T."/>
            <person name="Franco G.R."/>
            <person name="Freitas N.S.A."/>
            <person name="Furlan L.R."/>
            <person name="Gazzinelli R.T."/>
            <person name="Gomes E.A."/>
            <person name="Goncalves P.R."/>
            <person name="Grangeiro T.B."/>
            <person name="Grattapaglia D."/>
            <person name="Grisard E.C."/>
            <person name="Hanna E.S."/>
            <person name="Jardim S.N."/>
            <person name="Laurino J."/>
            <person name="Leoi L.C.T."/>
            <person name="Lima L.F.A."/>
            <person name="Loureiro M.F."/>
            <person name="Lyra M.C.C.P."/>
            <person name="Madeira H.M.F."/>
            <person name="Manfio G.P."/>
            <person name="Maranhao A.Q."/>
            <person name="Martins W.S."/>
            <person name="di Mauro S.M.Z."/>
            <person name="de Medeiros S.R.B."/>
            <person name="Meissner R.V."/>
            <person name="Moreira M.A.M."/>
            <person name="Nascimento F.F."/>
            <person name="Nicolas M.F."/>
            <person name="Oliveira J.G."/>
            <person name="Oliveira S.C."/>
            <person name="Paixao R.F.C."/>
            <person name="Parente J.A."/>
            <person name="Pedrosa F.O."/>
            <person name="Pena S.D.J."/>
            <person name="Pereira J.O."/>
            <person name="Pereira M."/>
            <person name="Pinto L.S.R.C."/>
            <person name="Pinto L.S."/>
            <person name="Porto J.I.R."/>
            <person name="Potrich D.P."/>
            <person name="Ramalho-Neto C.E."/>
            <person name="Reis A.M.M."/>
            <person name="Rigo L.U."/>
            <person name="Rondinelli E."/>
            <person name="Santos E.B.P."/>
            <person name="Santos F.R."/>
            <person name="Schneider M.P.C."/>
            <person name="Seuanez H.N."/>
            <person name="Silva A.M.R."/>
            <person name="da Silva A.L.C."/>
            <person name="Silva D.W."/>
            <person name="Silva R."/>
            <person name="Simoes I.C."/>
            <person name="Simon D."/>
            <person name="Soares C.M.A."/>
            <person name="Soares R.B.A."/>
            <person name="Souza E.M."/>
            <person name="Souza K.R.L."/>
            <person name="Souza R.C."/>
            <person name="Steffens M.B.R."/>
            <person name="Steindel M."/>
            <person name="Teixeira S.R."/>
            <person name="Urmenyi T."/>
            <person name="Vettore A."/>
            <person name="Wassem R."/>
            <person name="Zaha A."/>
            <person name="Simpson A.J.G."/>
        </authorList>
    </citation>
    <scope>NUCLEOTIDE SEQUENCE [LARGE SCALE GENOMIC DNA]</scope>
    <source>
        <strain>ATCC 12472 / DSM 30191 / JCM 1249 / CCUG 213 / NBRC 12614 / NCIMB 9131 / NCTC 9757 / MK</strain>
    </source>
</reference>
<organism>
    <name type="scientific">Chromobacterium violaceum (strain ATCC 12472 / DSM 30191 / JCM 1249 / CCUG 213 / NBRC 12614 / NCIMB 9131 / NCTC 9757 / MK)</name>
    <dbReference type="NCBI Taxonomy" id="243365"/>
    <lineage>
        <taxon>Bacteria</taxon>
        <taxon>Pseudomonadati</taxon>
        <taxon>Pseudomonadota</taxon>
        <taxon>Betaproteobacteria</taxon>
        <taxon>Neisseriales</taxon>
        <taxon>Chromobacteriaceae</taxon>
        <taxon>Chromobacterium</taxon>
    </lineage>
</organism>